<keyword id="KW-0067">ATP-binding</keyword>
<keyword id="KW-0963">Cytoplasm</keyword>
<keyword id="KW-0227">DNA damage</keyword>
<keyword id="KW-0234">DNA repair</keyword>
<keyword id="KW-0235">DNA replication</keyword>
<keyword id="KW-0238">DNA-binding</keyword>
<keyword id="KW-0547">Nucleotide-binding</keyword>
<keyword id="KW-1185">Reference proteome</keyword>
<keyword id="KW-0742">SOS response</keyword>
<name>RECF_NOCFA</name>
<protein>
    <recommendedName>
        <fullName evidence="1">DNA replication and repair protein RecF</fullName>
    </recommendedName>
</protein>
<comment type="function">
    <text evidence="1">The RecF protein is involved in DNA metabolism; it is required for DNA replication and normal SOS inducibility. RecF binds preferentially to single-stranded, linear DNA. It also seems to bind ATP.</text>
</comment>
<comment type="subcellular location">
    <subcellularLocation>
        <location evidence="1">Cytoplasm</location>
    </subcellularLocation>
</comment>
<comment type="similarity">
    <text evidence="1">Belongs to the RecF family.</text>
</comment>
<feature type="chain" id="PRO_0000236130" description="DNA replication and repair protein RecF">
    <location>
        <begin position="1"/>
        <end position="388"/>
    </location>
</feature>
<feature type="binding site" evidence="1">
    <location>
        <begin position="30"/>
        <end position="37"/>
    </location>
    <ligand>
        <name>ATP</name>
        <dbReference type="ChEBI" id="CHEBI:30616"/>
    </ligand>
</feature>
<proteinExistence type="inferred from homology"/>
<accession>Q5Z3Z6</accession>
<evidence type="ECO:0000255" key="1">
    <source>
        <dbReference type="HAMAP-Rule" id="MF_00365"/>
    </source>
</evidence>
<dbReference type="EMBL" id="AP006618">
    <property type="protein sequence ID" value="BAD54845.1"/>
    <property type="molecule type" value="Genomic_DNA"/>
</dbReference>
<dbReference type="RefSeq" id="WP_011206532.1">
    <property type="nucleotide sequence ID" value="NC_006361.1"/>
</dbReference>
<dbReference type="SMR" id="Q5Z3Z6"/>
<dbReference type="STRING" id="247156.NFA_30"/>
<dbReference type="GeneID" id="61130861"/>
<dbReference type="KEGG" id="nfa:NFA_30"/>
<dbReference type="eggNOG" id="COG1195">
    <property type="taxonomic scope" value="Bacteria"/>
</dbReference>
<dbReference type="HOGENOM" id="CLU_040267_1_1_11"/>
<dbReference type="OrthoDB" id="9803889at2"/>
<dbReference type="Proteomes" id="UP000006820">
    <property type="component" value="Chromosome"/>
</dbReference>
<dbReference type="GO" id="GO:0005737">
    <property type="term" value="C:cytoplasm"/>
    <property type="evidence" value="ECO:0007669"/>
    <property type="project" value="UniProtKB-SubCell"/>
</dbReference>
<dbReference type="GO" id="GO:0005524">
    <property type="term" value="F:ATP binding"/>
    <property type="evidence" value="ECO:0007669"/>
    <property type="project" value="UniProtKB-UniRule"/>
</dbReference>
<dbReference type="GO" id="GO:0003697">
    <property type="term" value="F:single-stranded DNA binding"/>
    <property type="evidence" value="ECO:0007669"/>
    <property type="project" value="UniProtKB-UniRule"/>
</dbReference>
<dbReference type="GO" id="GO:0006260">
    <property type="term" value="P:DNA replication"/>
    <property type="evidence" value="ECO:0007669"/>
    <property type="project" value="UniProtKB-UniRule"/>
</dbReference>
<dbReference type="GO" id="GO:0000731">
    <property type="term" value="P:DNA synthesis involved in DNA repair"/>
    <property type="evidence" value="ECO:0007669"/>
    <property type="project" value="TreeGrafter"/>
</dbReference>
<dbReference type="GO" id="GO:0006302">
    <property type="term" value="P:double-strand break repair"/>
    <property type="evidence" value="ECO:0007669"/>
    <property type="project" value="TreeGrafter"/>
</dbReference>
<dbReference type="GO" id="GO:0009432">
    <property type="term" value="P:SOS response"/>
    <property type="evidence" value="ECO:0007669"/>
    <property type="project" value="UniProtKB-UniRule"/>
</dbReference>
<dbReference type="Gene3D" id="3.40.50.300">
    <property type="entry name" value="P-loop containing nucleotide triphosphate hydrolases"/>
    <property type="match status" value="1"/>
</dbReference>
<dbReference type="Gene3D" id="1.20.1050.90">
    <property type="entry name" value="RecF/RecN/SMC, N-terminal domain"/>
    <property type="match status" value="1"/>
</dbReference>
<dbReference type="HAMAP" id="MF_00365">
    <property type="entry name" value="RecF"/>
    <property type="match status" value="1"/>
</dbReference>
<dbReference type="InterPro" id="IPR001238">
    <property type="entry name" value="DNA-binding_RecF"/>
</dbReference>
<dbReference type="InterPro" id="IPR018078">
    <property type="entry name" value="DNA-binding_RecF_CS"/>
</dbReference>
<dbReference type="InterPro" id="IPR027417">
    <property type="entry name" value="P-loop_NTPase"/>
</dbReference>
<dbReference type="InterPro" id="IPR003395">
    <property type="entry name" value="RecF/RecN/SMC_N"/>
</dbReference>
<dbReference type="InterPro" id="IPR042174">
    <property type="entry name" value="RecF_2"/>
</dbReference>
<dbReference type="NCBIfam" id="TIGR00611">
    <property type="entry name" value="recf"/>
    <property type="match status" value="1"/>
</dbReference>
<dbReference type="PANTHER" id="PTHR32182">
    <property type="entry name" value="DNA REPLICATION AND REPAIR PROTEIN RECF"/>
    <property type="match status" value="1"/>
</dbReference>
<dbReference type="PANTHER" id="PTHR32182:SF0">
    <property type="entry name" value="DNA REPLICATION AND REPAIR PROTEIN RECF"/>
    <property type="match status" value="1"/>
</dbReference>
<dbReference type="Pfam" id="PF02463">
    <property type="entry name" value="SMC_N"/>
    <property type="match status" value="1"/>
</dbReference>
<dbReference type="SUPFAM" id="SSF52540">
    <property type="entry name" value="P-loop containing nucleoside triphosphate hydrolases"/>
    <property type="match status" value="1"/>
</dbReference>
<dbReference type="PROSITE" id="PS00617">
    <property type="entry name" value="RECF_1"/>
    <property type="match status" value="1"/>
</dbReference>
<dbReference type="PROSITE" id="PS00618">
    <property type="entry name" value="RECF_2"/>
    <property type="match status" value="1"/>
</dbReference>
<sequence length="388" mass="42291">MFVRALSLRDFRSWEHVELELSTGRTVFLGANGNGKTNLLEAVGYLATLGSHRVSADAPLIRSGAQRARVGANVVNAGRELRIDVELNQGSANRAQINRSPVRRTREILGILQTVLFAPEDLALVRGDPGERRRFLDELCTARLPRLAGVRADYDRVLRQRSALLKTAGRHARSTADLSTLDVWDGHLAGHAAVLVAQRLRLVHDLFPYLAEAYRSLAPESRPAAIGYRSAYLPGEFLDPARAPRDDDAAALEEIILRELAAARRKELERGVCLVGPHRDELELMLGDTPAKGFASHGESWSFALALRLASFDLLRSTSAEPVLLLDDVFAELDRRRRTALAAVAADAEQVLITAAVPEDVPAELSATPIRVATAGEAGHRTSHIVTG</sequence>
<reference key="1">
    <citation type="journal article" date="2004" name="Proc. Natl. Acad. Sci. U.S.A.">
        <title>The complete genomic sequence of Nocardia farcinica IFM 10152.</title>
        <authorList>
            <person name="Ishikawa J."/>
            <person name="Yamashita A."/>
            <person name="Mikami Y."/>
            <person name="Hoshino Y."/>
            <person name="Kurita H."/>
            <person name="Hotta K."/>
            <person name="Shiba T."/>
            <person name="Hattori M."/>
        </authorList>
    </citation>
    <scope>NUCLEOTIDE SEQUENCE [LARGE SCALE GENOMIC DNA]</scope>
    <source>
        <strain>IFM 10152</strain>
    </source>
</reference>
<organism>
    <name type="scientific">Nocardia farcinica (strain IFM 10152)</name>
    <dbReference type="NCBI Taxonomy" id="247156"/>
    <lineage>
        <taxon>Bacteria</taxon>
        <taxon>Bacillati</taxon>
        <taxon>Actinomycetota</taxon>
        <taxon>Actinomycetes</taxon>
        <taxon>Mycobacteriales</taxon>
        <taxon>Nocardiaceae</taxon>
        <taxon>Nocardia</taxon>
    </lineage>
</organism>
<gene>
    <name evidence="1" type="primary">recF</name>
    <name type="ordered locus">NFA_30</name>
</gene>